<accession>Q8X5R8</accession>
<accession>Q7A914</accession>
<evidence type="ECO:0000250" key="1"/>
<evidence type="ECO:0000255" key="2"/>
<evidence type="ECO:0000305" key="3"/>
<keyword id="KW-0046">Antibiotic resistance</keyword>
<keyword id="KW-0997">Cell inner membrane</keyword>
<keyword id="KW-1003">Cell membrane</keyword>
<keyword id="KW-0472">Membrane</keyword>
<keyword id="KW-1185">Reference proteome</keyword>
<keyword id="KW-0812">Transmembrane</keyword>
<keyword id="KW-1133">Transmembrane helix</keyword>
<keyword id="KW-0813">Transport</keyword>
<protein>
    <recommendedName>
        <fullName>Multidrug resistance protein MdtO</fullName>
    </recommendedName>
</protein>
<organism>
    <name type="scientific">Escherichia coli O157:H7</name>
    <dbReference type="NCBI Taxonomy" id="83334"/>
    <lineage>
        <taxon>Bacteria</taxon>
        <taxon>Pseudomonadati</taxon>
        <taxon>Pseudomonadota</taxon>
        <taxon>Gammaproteobacteria</taxon>
        <taxon>Enterobacterales</taxon>
        <taxon>Enterobacteriaceae</taxon>
        <taxon>Escherichia</taxon>
    </lineage>
</organism>
<gene>
    <name type="primary">mdtO</name>
    <name type="ordered locus">Z5681</name>
    <name type="ordered locus">ECs5063</name>
</gene>
<reference key="1">
    <citation type="journal article" date="2001" name="Nature">
        <title>Genome sequence of enterohaemorrhagic Escherichia coli O157:H7.</title>
        <authorList>
            <person name="Perna N.T."/>
            <person name="Plunkett G. III"/>
            <person name="Burland V."/>
            <person name="Mau B."/>
            <person name="Glasner J.D."/>
            <person name="Rose D.J."/>
            <person name="Mayhew G.F."/>
            <person name="Evans P.S."/>
            <person name="Gregor J."/>
            <person name="Kirkpatrick H.A."/>
            <person name="Posfai G."/>
            <person name="Hackett J."/>
            <person name="Klink S."/>
            <person name="Boutin A."/>
            <person name="Shao Y."/>
            <person name="Miller L."/>
            <person name="Grotbeck E.J."/>
            <person name="Davis N.W."/>
            <person name="Lim A."/>
            <person name="Dimalanta E.T."/>
            <person name="Potamousis K."/>
            <person name="Apodaca J."/>
            <person name="Anantharaman T.S."/>
            <person name="Lin J."/>
            <person name="Yen G."/>
            <person name="Schwartz D.C."/>
            <person name="Welch R.A."/>
            <person name="Blattner F.R."/>
        </authorList>
    </citation>
    <scope>NUCLEOTIDE SEQUENCE [LARGE SCALE GENOMIC DNA]</scope>
    <source>
        <strain>O157:H7 / EDL933 / ATCC 700927 / EHEC</strain>
    </source>
</reference>
<reference key="2">
    <citation type="journal article" date="2001" name="DNA Res.">
        <title>Complete genome sequence of enterohemorrhagic Escherichia coli O157:H7 and genomic comparison with a laboratory strain K-12.</title>
        <authorList>
            <person name="Hayashi T."/>
            <person name="Makino K."/>
            <person name="Ohnishi M."/>
            <person name="Kurokawa K."/>
            <person name="Ishii K."/>
            <person name="Yokoyama K."/>
            <person name="Han C.-G."/>
            <person name="Ohtsubo E."/>
            <person name="Nakayama K."/>
            <person name="Murata T."/>
            <person name="Tanaka M."/>
            <person name="Tobe T."/>
            <person name="Iida T."/>
            <person name="Takami H."/>
            <person name="Honda T."/>
            <person name="Sasakawa C."/>
            <person name="Ogasawara N."/>
            <person name="Yasunaga T."/>
            <person name="Kuhara S."/>
            <person name="Shiba T."/>
            <person name="Hattori M."/>
            <person name="Shinagawa H."/>
        </authorList>
    </citation>
    <scope>NUCLEOTIDE SEQUENCE [LARGE SCALE GENOMIC DNA]</scope>
    <source>
        <strain>O157:H7 / Sakai / RIMD 0509952 / EHEC</strain>
    </source>
</reference>
<dbReference type="EMBL" id="AE005174">
    <property type="protein sequence ID" value="AAG59279.1"/>
    <property type="status" value="ALT_INIT"/>
    <property type="molecule type" value="Genomic_DNA"/>
</dbReference>
<dbReference type="EMBL" id="BA000007">
    <property type="protein sequence ID" value="BAB38486.2"/>
    <property type="molecule type" value="Genomic_DNA"/>
</dbReference>
<dbReference type="PIR" id="C86102">
    <property type="entry name" value="C86102"/>
</dbReference>
<dbReference type="PIR" id="G91261">
    <property type="entry name" value="G91261"/>
</dbReference>
<dbReference type="RefSeq" id="NP_313090.2">
    <property type="nucleotide sequence ID" value="NC_002695.1"/>
</dbReference>
<dbReference type="RefSeq" id="WP_001275213.1">
    <property type="nucleotide sequence ID" value="NZ_VOAI01000008.1"/>
</dbReference>
<dbReference type="STRING" id="155864.Z5681"/>
<dbReference type="GeneID" id="914278"/>
<dbReference type="KEGG" id="ece:Z5681"/>
<dbReference type="KEGG" id="ecs:ECs_5063"/>
<dbReference type="PATRIC" id="fig|386585.9.peg.5291"/>
<dbReference type="eggNOG" id="COG1289">
    <property type="taxonomic scope" value="Bacteria"/>
</dbReference>
<dbReference type="HOGENOM" id="CLU_023392_1_0_6"/>
<dbReference type="OMA" id="WPGIHTC"/>
<dbReference type="Proteomes" id="UP000000558">
    <property type="component" value="Chromosome"/>
</dbReference>
<dbReference type="Proteomes" id="UP000002519">
    <property type="component" value="Chromosome"/>
</dbReference>
<dbReference type="GO" id="GO:0005886">
    <property type="term" value="C:plasma membrane"/>
    <property type="evidence" value="ECO:0007669"/>
    <property type="project" value="UniProtKB-SubCell"/>
</dbReference>
<dbReference type="GO" id="GO:0022857">
    <property type="term" value="F:transmembrane transporter activity"/>
    <property type="evidence" value="ECO:0007669"/>
    <property type="project" value="InterPro"/>
</dbReference>
<dbReference type="GO" id="GO:0046677">
    <property type="term" value="P:response to antibiotic"/>
    <property type="evidence" value="ECO:0007669"/>
    <property type="project" value="UniProtKB-KW"/>
</dbReference>
<dbReference type="InterPro" id="IPR006726">
    <property type="entry name" value="PHBA_efflux_AaeB/fusaric-R"/>
</dbReference>
<dbReference type="NCBIfam" id="NF008510">
    <property type="entry name" value="PRK11427.1"/>
    <property type="match status" value="1"/>
</dbReference>
<dbReference type="PANTHER" id="PTHR30509:SF9">
    <property type="entry name" value="MULTIDRUG RESISTANCE PROTEIN MDTO"/>
    <property type="match status" value="1"/>
</dbReference>
<dbReference type="PANTHER" id="PTHR30509">
    <property type="entry name" value="P-HYDROXYBENZOIC ACID EFFLUX PUMP SUBUNIT-RELATED"/>
    <property type="match status" value="1"/>
</dbReference>
<dbReference type="Pfam" id="PF04632">
    <property type="entry name" value="FUSC"/>
    <property type="match status" value="1"/>
</dbReference>
<proteinExistence type="inferred from homology"/>
<feature type="chain" id="PRO_0000210091" description="Multidrug resistance protein MdtO">
    <location>
        <begin position="1"/>
        <end position="683"/>
    </location>
</feature>
<feature type="transmembrane region" description="Helical" evidence="2">
    <location>
        <begin position="43"/>
        <end position="63"/>
    </location>
</feature>
<feature type="transmembrane region" description="Helical" evidence="2">
    <location>
        <begin position="75"/>
        <end position="95"/>
    </location>
</feature>
<feature type="transmembrane region" description="Helical" evidence="2">
    <location>
        <begin position="100"/>
        <end position="120"/>
    </location>
</feature>
<feature type="transmembrane region" description="Helical" evidence="2">
    <location>
        <begin position="125"/>
        <end position="145"/>
    </location>
</feature>
<feature type="transmembrane region" description="Helical" evidence="2">
    <location>
        <begin position="158"/>
        <end position="178"/>
    </location>
</feature>
<feature type="transmembrane region" description="Helical" evidence="2">
    <location>
        <begin position="402"/>
        <end position="422"/>
    </location>
</feature>
<feature type="transmembrane region" description="Helical" evidence="2">
    <location>
        <begin position="426"/>
        <end position="446"/>
    </location>
</feature>
<feature type="transmembrane region" description="Helical" evidence="2">
    <location>
        <begin position="457"/>
        <end position="477"/>
    </location>
</feature>
<feature type="transmembrane region" description="Helical" evidence="2">
    <location>
        <begin position="483"/>
        <end position="503"/>
    </location>
</feature>
<sequence length="683" mass="76119">MSALNSLPLPVVRLLAFFHEELSERRPGRVPQTVQLWVGCLLVILISMTFEIPFVALSLAVLFYGIQSNAFYTKFVAILFVVATVLEIGSLFLIYKWSYGEPLIRLIIAGPILMGCMFLMRTHRLGLVFFAVAIVAIYGQTFPAMLDYPEVVVRLTLWCIVVGLYPTLLMTLIGVLWFPSRAISQMHQALNDRLDDAISHLTDSLAPLPETRIEREALALQKLNVFCLADDANWRTQSAWWQSCVATVTYIYSTLNRYDPTSFADSQAIIEFRQKLASEINKLQHAITEGQCWQSDWRISESEAMAARECNLENICQTLLQLGQMDPNTPPTPAAKPPSMVADAFTNPDYMRYAVKTLLACLICYTFYSGVDWEGIHTCMLTCVIVANPNVGSSYQKMVLRFGGAFCGAILALLFTLLVMPWLDNIVELLFVLAPIFLLGAWIATSSERSSYIGTQMVVTFALATLENVFGPVYDLVEIRDRALGIIIGTVVSAVIYTFVWPESEARTLPQKLAGALGMLSKVMRIPRQQEVTALRTYLQIRIGLHAAFNACEEMCQRVALERQLDSEERALLIERSQTVIHQGRDLLHAWDATWNSAQALDNALQPDKAGQFADALEKYAAGLATALSRSPQITLEETPASQAILPTLLKQEQHVCQLFARLPDWTAPALTPATEQAQGATQ</sequence>
<comment type="function">
    <text evidence="1">Could be involved in resistance to puromycin, acriflavine and tetraphenylarsonium chloride.</text>
</comment>
<comment type="subunit">
    <text evidence="1">Could be part of a tripartite efflux system composed of MdtN, MdtO and MdtP.</text>
</comment>
<comment type="subcellular location">
    <subcellularLocation>
        <location evidence="1">Cell inner membrane</location>
        <topology evidence="1">Multi-pass membrane protein</topology>
    </subcellularLocation>
</comment>
<comment type="similarity">
    <text evidence="3">Belongs to the MdtO family.</text>
</comment>
<comment type="sequence caution" evidence="3">
    <conflict type="erroneous initiation">
        <sequence resource="EMBL-CDS" id="AAG59279"/>
    </conflict>
    <text>Truncated N-terminus.</text>
</comment>
<name>MDTO_ECO57</name>